<feature type="chain" id="PRO_0000335506" description="Translation initiation factor IF-2">
    <location>
        <begin position="1"/>
        <end position="689"/>
    </location>
</feature>
<feature type="domain" description="tr-type G">
    <location>
        <begin position="192"/>
        <end position="361"/>
    </location>
</feature>
<feature type="region of interest" description="Disordered" evidence="3">
    <location>
        <begin position="41"/>
        <end position="109"/>
    </location>
</feature>
<feature type="region of interest" description="G1" evidence="1">
    <location>
        <begin position="201"/>
        <end position="208"/>
    </location>
</feature>
<feature type="region of interest" description="G2" evidence="1">
    <location>
        <begin position="226"/>
        <end position="230"/>
    </location>
</feature>
<feature type="region of interest" description="G3" evidence="1">
    <location>
        <begin position="247"/>
        <end position="250"/>
    </location>
</feature>
<feature type="region of interest" description="G4" evidence="1">
    <location>
        <begin position="301"/>
        <end position="304"/>
    </location>
</feature>
<feature type="region of interest" description="G5" evidence="1">
    <location>
        <begin position="337"/>
        <end position="339"/>
    </location>
</feature>
<feature type="compositionally biased region" description="Basic residues" evidence="3">
    <location>
        <begin position="61"/>
        <end position="70"/>
    </location>
</feature>
<feature type="compositionally biased region" description="Low complexity" evidence="3">
    <location>
        <begin position="80"/>
        <end position="94"/>
    </location>
</feature>
<feature type="compositionally biased region" description="Basic and acidic residues" evidence="3">
    <location>
        <begin position="96"/>
        <end position="109"/>
    </location>
</feature>
<feature type="binding site" evidence="2">
    <location>
        <begin position="201"/>
        <end position="208"/>
    </location>
    <ligand>
        <name>GTP</name>
        <dbReference type="ChEBI" id="CHEBI:37565"/>
    </ligand>
</feature>
<feature type="binding site" evidence="2">
    <location>
        <begin position="247"/>
        <end position="251"/>
    </location>
    <ligand>
        <name>GTP</name>
        <dbReference type="ChEBI" id="CHEBI:37565"/>
    </ligand>
</feature>
<feature type="binding site" evidence="2">
    <location>
        <begin position="301"/>
        <end position="304"/>
    </location>
    <ligand>
        <name>GTP</name>
        <dbReference type="ChEBI" id="CHEBI:37565"/>
    </ligand>
</feature>
<proteinExistence type="inferred from homology"/>
<sequence>MSKRVYEIAKELDLDTKEVIGRLNAAGIEVKNHFATVEDPDYERVFGGGNGRSEAGEERGRKGRQKKRRRVVIDASATNRGPRAAAPSRPSRGRGAAREEAPAAEEREAPEVVRVEPGATVRDLGEALGVPPTRIIQILMGLGEMKTVTQTLSTEEIELVAEELGRRVEVGALEEPAPEEIGPEDSPEDLVEKPPVITVMGHVDHGKTSLLDRIRRTNVVSGEAGGITQHIGAYQVEHEGRRITFIDTPGHEAFTEMRARGARVTDIVVLVVAADDGVMPQTEEAIEHARAAGVPIVVAINKIDVPNANPDRVMGELAERGLTPEQWGGETVTVPVSAKTGEGIEDLLENILVVAELEELRANPKAPASGYVIESRLDPGRGPVATLLLNRGTLHRGDVVLAGTAYGRVRAMFDYTGQRIKEAGPGTPVEILGLSGVPEAGTRFEVAENERAARSRAQQAEERLRRQELAASGPRRTTLEELLGEGGAEELNLVVKADVAGSVEALKEALAKLSTDEVRVNVVRSGVGAVTDSDIMLASASGGIVIGFNVRPTNTAKQVAEREGVEIRTYDVIYKVIEEIEAAMKGMLAPETAERETATAEVRATFRVPNVGTVAGCYVTSGEIRRNNRVRVVRDGTVVYDGQIASLKRFKDDVRTVREGFECGVGIENFNDVKEGDVLEFYEVVEIPR</sequence>
<organism>
    <name type="scientific">Rubrobacter xylanophilus (strain DSM 9941 / JCM 11954 / NBRC 16129 / PRD-1)</name>
    <dbReference type="NCBI Taxonomy" id="266117"/>
    <lineage>
        <taxon>Bacteria</taxon>
        <taxon>Bacillati</taxon>
        <taxon>Actinomycetota</taxon>
        <taxon>Rubrobacteria</taxon>
        <taxon>Rubrobacterales</taxon>
        <taxon>Rubrobacteraceae</taxon>
        <taxon>Rubrobacter</taxon>
    </lineage>
</organism>
<name>IF2_RUBXD</name>
<evidence type="ECO:0000250" key="1"/>
<evidence type="ECO:0000255" key="2">
    <source>
        <dbReference type="HAMAP-Rule" id="MF_00100"/>
    </source>
</evidence>
<evidence type="ECO:0000256" key="3">
    <source>
        <dbReference type="SAM" id="MobiDB-lite"/>
    </source>
</evidence>
<comment type="function">
    <text evidence="2">One of the essential components for the initiation of protein synthesis. Protects formylmethionyl-tRNA from spontaneous hydrolysis and promotes its binding to the 30S ribosomal subunits. Also involved in the hydrolysis of GTP during the formation of the 70S ribosomal complex.</text>
</comment>
<comment type="subcellular location">
    <subcellularLocation>
        <location evidence="2">Cytoplasm</location>
    </subcellularLocation>
</comment>
<comment type="similarity">
    <text evidence="2">Belongs to the TRAFAC class translation factor GTPase superfamily. Classic translation factor GTPase family. IF-2 subfamily.</text>
</comment>
<reference key="1">
    <citation type="submission" date="2006-06" db="EMBL/GenBank/DDBJ databases">
        <title>Complete sequence of Rubrobacter xylanophilus DSM 9941.</title>
        <authorList>
            <consortium name="US DOE Joint Genome Institute"/>
            <person name="Copeland A."/>
            <person name="Lucas S."/>
            <person name="Lapidus A."/>
            <person name="Barry K."/>
            <person name="Detter J.C."/>
            <person name="Glavina del Rio T."/>
            <person name="Hammon N."/>
            <person name="Israni S."/>
            <person name="Dalin E."/>
            <person name="Tice H."/>
            <person name="Pitluck S."/>
            <person name="Munk A.C."/>
            <person name="Brettin T."/>
            <person name="Bruce D."/>
            <person name="Han C."/>
            <person name="Tapia R."/>
            <person name="Gilna P."/>
            <person name="Schmutz J."/>
            <person name="Larimer F."/>
            <person name="Land M."/>
            <person name="Hauser L."/>
            <person name="Kyrpides N."/>
            <person name="Lykidis A."/>
            <person name="da Costa M.S."/>
            <person name="Rainey F.A."/>
            <person name="Empadinhas N."/>
            <person name="Jolivet E."/>
            <person name="Battista J.R."/>
            <person name="Richardson P."/>
        </authorList>
    </citation>
    <scope>NUCLEOTIDE SEQUENCE [LARGE SCALE GENOMIC DNA]</scope>
    <source>
        <strain>DSM 9941 / JCM 11954 / NBRC 16129 / PRD-1</strain>
    </source>
</reference>
<accession>Q1AW55</accession>
<protein>
    <recommendedName>
        <fullName evidence="2">Translation initiation factor IF-2</fullName>
    </recommendedName>
</protein>
<dbReference type="EMBL" id="CP000386">
    <property type="protein sequence ID" value="ABG04373.1"/>
    <property type="molecule type" value="Genomic_DNA"/>
</dbReference>
<dbReference type="RefSeq" id="WP_011564390.1">
    <property type="nucleotide sequence ID" value="NC_008148.1"/>
</dbReference>
<dbReference type="SMR" id="Q1AW55"/>
<dbReference type="STRING" id="266117.Rxyl_1411"/>
<dbReference type="KEGG" id="rxy:Rxyl_1411"/>
<dbReference type="eggNOG" id="COG0532">
    <property type="taxonomic scope" value="Bacteria"/>
</dbReference>
<dbReference type="HOGENOM" id="CLU_006301_5_1_11"/>
<dbReference type="OrthoDB" id="9811804at2"/>
<dbReference type="PhylomeDB" id="Q1AW55"/>
<dbReference type="Proteomes" id="UP000006637">
    <property type="component" value="Chromosome"/>
</dbReference>
<dbReference type="GO" id="GO:0005829">
    <property type="term" value="C:cytosol"/>
    <property type="evidence" value="ECO:0007669"/>
    <property type="project" value="TreeGrafter"/>
</dbReference>
<dbReference type="GO" id="GO:0005525">
    <property type="term" value="F:GTP binding"/>
    <property type="evidence" value="ECO:0007669"/>
    <property type="project" value="UniProtKB-KW"/>
</dbReference>
<dbReference type="GO" id="GO:0003924">
    <property type="term" value="F:GTPase activity"/>
    <property type="evidence" value="ECO:0007669"/>
    <property type="project" value="UniProtKB-UniRule"/>
</dbReference>
<dbReference type="GO" id="GO:0003743">
    <property type="term" value="F:translation initiation factor activity"/>
    <property type="evidence" value="ECO:0007669"/>
    <property type="project" value="UniProtKB-UniRule"/>
</dbReference>
<dbReference type="CDD" id="cd01887">
    <property type="entry name" value="IF2_eIF5B"/>
    <property type="match status" value="1"/>
</dbReference>
<dbReference type="CDD" id="cd03702">
    <property type="entry name" value="IF2_mtIF2_II"/>
    <property type="match status" value="1"/>
</dbReference>
<dbReference type="CDD" id="cd03692">
    <property type="entry name" value="mtIF2_IVc"/>
    <property type="match status" value="1"/>
</dbReference>
<dbReference type="FunFam" id="2.40.30.10:FF:000008">
    <property type="entry name" value="Translation initiation factor IF-2"/>
    <property type="match status" value="1"/>
</dbReference>
<dbReference type="FunFam" id="2.40.30.10:FF:000054">
    <property type="entry name" value="Translation initiation factor IF-2"/>
    <property type="match status" value="1"/>
</dbReference>
<dbReference type="FunFam" id="3.40.50.10050:FF:000001">
    <property type="entry name" value="Translation initiation factor IF-2"/>
    <property type="match status" value="1"/>
</dbReference>
<dbReference type="FunFam" id="3.40.50.300:FF:000019">
    <property type="entry name" value="Translation initiation factor IF-2"/>
    <property type="match status" value="1"/>
</dbReference>
<dbReference type="Gene3D" id="1.10.10.2480">
    <property type="match status" value="1"/>
</dbReference>
<dbReference type="Gene3D" id="3.40.50.300">
    <property type="entry name" value="P-loop containing nucleotide triphosphate hydrolases"/>
    <property type="match status" value="1"/>
</dbReference>
<dbReference type="Gene3D" id="2.40.30.10">
    <property type="entry name" value="Translation factors"/>
    <property type="match status" value="2"/>
</dbReference>
<dbReference type="Gene3D" id="3.40.50.10050">
    <property type="entry name" value="Translation initiation factor IF- 2, domain 3"/>
    <property type="match status" value="1"/>
</dbReference>
<dbReference type="HAMAP" id="MF_00100_B">
    <property type="entry name" value="IF_2_B"/>
    <property type="match status" value="1"/>
</dbReference>
<dbReference type="InterPro" id="IPR053905">
    <property type="entry name" value="EF-G-like_DII"/>
</dbReference>
<dbReference type="InterPro" id="IPR004161">
    <property type="entry name" value="EFTu-like_2"/>
</dbReference>
<dbReference type="InterPro" id="IPR044145">
    <property type="entry name" value="IF2_II"/>
</dbReference>
<dbReference type="InterPro" id="IPR006847">
    <property type="entry name" value="IF2_N"/>
</dbReference>
<dbReference type="InterPro" id="IPR027417">
    <property type="entry name" value="P-loop_NTPase"/>
</dbReference>
<dbReference type="InterPro" id="IPR005225">
    <property type="entry name" value="Small_GTP-bd"/>
</dbReference>
<dbReference type="InterPro" id="IPR000795">
    <property type="entry name" value="T_Tr_GTP-bd_dom"/>
</dbReference>
<dbReference type="InterPro" id="IPR000178">
    <property type="entry name" value="TF_IF2_bacterial-like"/>
</dbReference>
<dbReference type="InterPro" id="IPR015760">
    <property type="entry name" value="TIF_IF2"/>
</dbReference>
<dbReference type="InterPro" id="IPR023115">
    <property type="entry name" value="TIF_IF2_dom3"/>
</dbReference>
<dbReference type="InterPro" id="IPR036925">
    <property type="entry name" value="TIF_IF2_dom3_sf"/>
</dbReference>
<dbReference type="InterPro" id="IPR009000">
    <property type="entry name" value="Transl_B-barrel_sf"/>
</dbReference>
<dbReference type="NCBIfam" id="TIGR00487">
    <property type="entry name" value="IF-2"/>
    <property type="match status" value="1"/>
</dbReference>
<dbReference type="NCBIfam" id="TIGR00231">
    <property type="entry name" value="small_GTP"/>
    <property type="match status" value="1"/>
</dbReference>
<dbReference type="PANTHER" id="PTHR43381:SF5">
    <property type="entry name" value="TR-TYPE G DOMAIN-CONTAINING PROTEIN"/>
    <property type="match status" value="1"/>
</dbReference>
<dbReference type="PANTHER" id="PTHR43381">
    <property type="entry name" value="TRANSLATION INITIATION FACTOR IF-2-RELATED"/>
    <property type="match status" value="1"/>
</dbReference>
<dbReference type="Pfam" id="PF22042">
    <property type="entry name" value="EF-G_D2"/>
    <property type="match status" value="1"/>
</dbReference>
<dbReference type="Pfam" id="PF00009">
    <property type="entry name" value="GTP_EFTU"/>
    <property type="match status" value="1"/>
</dbReference>
<dbReference type="Pfam" id="PF03144">
    <property type="entry name" value="GTP_EFTU_D2"/>
    <property type="match status" value="1"/>
</dbReference>
<dbReference type="Pfam" id="PF11987">
    <property type="entry name" value="IF-2"/>
    <property type="match status" value="1"/>
</dbReference>
<dbReference type="Pfam" id="PF04760">
    <property type="entry name" value="IF2_N"/>
    <property type="match status" value="2"/>
</dbReference>
<dbReference type="SUPFAM" id="SSF52156">
    <property type="entry name" value="Initiation factor IF2/eIF5b, domain 3"/>
    <property type="match status" value="1"/>
</dbReference>
<dbReference type="SUPFAM" id="SSF52540">
    <property type="entry name" value="P-loop containing nucleoside triphosphate hydrolases"/>
    <property type="match status" value="1"/>
</dbReference>
<dbReference type="SUPFAM" id="SSF50447">
    <property type="entry name" value="Translation proteins"/>
    <property type="match status" value="2"/>
</dbReference>
<dbReference type="PROSITE" id="PS51722">
    <property type="entry name" value="G_TR_2"/>
    <property type="match status" value="1"/>
</dbReference>
<dbReference type="PROSITE" id="PS01176">
    <property type="entry name" value="IF2"/>
    <property type="match status" value="1"/>
</dbReference>
<keyword id="KW-0963">Cytoplasm</keyword>
<keyword id="KW-0342">GTP-binding</keyword>
<keyword id="KW-0396">Initiation factor</keyword>
<keyword id="KW-0547">Nucleotide-binding</keyword>
<keyword id="KW-0648">Protein biosynthesis</keyword>
<keyword id="KW-1185">Reference proteome</keyword>
<gene>
    <name evidence="2" type="primary">infB</name>
    <name type="ordered locus">Rxyl_1411</name>
</gene>